<name>TDXH2_SULTO</name>
<comment type="function">
    <text evidence="1">Thiol-specific peroxidase that catalyzes the reduction of hydrogen peroxide and organic hydroperoxides to water and alcohols, respectively. Plays a role in cell protection against oxidative stress by detoxifying peroxides.</text>
</comment>
<comment type="catalytic activity">
    <reaction evidence="1">
        <text>a hydroperoxide + [thioredoxin]-dithiol = an alcohol + [thioredoxin]-disulfide + H2O</text>
        <dbReference type="Rhea" id="RHEA:62620"/>
        <dbReference type="Rhea" id="RHEA-COMP:10698"/>
        <dbReference type="Rhea" id="RHEA-COMP:10700"/>
        <dbReference type="ChEBI" id="CHEBI:15377"/>
        <dbReference type="ChEBI" id="CHEBI:29950"/>
        <dbReference type="ChEBI" id="CHEBI:30879"/>
        <dbReference type="ChEBI" id="CHEBI:35924"/>
        <dbReference type="ChEBI" id="CHEBI:50058"/>
        <dbReference type="EC" id="1.11.1.24"/>
    </reaction>
</comment>
<comment type="subunit">
    <text evidence="1">Homodecamer. Pentamer of dimers that assemble into a ring structure.</text>
</comment>
<comment type="subcellular location">
    <subcellularLocation>
        <location evidence="1">Cytoplasm</location>
    </subcellularLocation>
</comment>
<comment type="miscellaneous">
    <text evidence="1">The active site is a conserved redox-active cysteine residue, the peroxidatic cysteine (C(P)), which makes the nucleophilic attack on the peroxide substrate. The peroxide oxidizes the C(P)-SH to cysteine sulfenic acid (C(P)-SOH), which then reacts with another cysteine residue, the resolving cysteine (C(R)), to form a disulfide bridge. The disulfide is subsequently reduced by an appropriate electron donor to complete the catalytic cycle. In this 1-Cys peroxiredoxin, no C(R) is present and C(P) instead forms a disulfide with a cysteine from another protein or with a small thiol molecule.</text>
</comment>
<comment type="similarity">
    <text evidence="1">Belongs to the peroxiredoxin family. Prx6 subfamily.</text>
</comment>
<evidence type="ECO:0000255" key="1">
    <source>
        <dbReference type="HAMAP-Rule" id="MF_00401"/>
    </source>
</evidence>
<organism>
    <name type="scientific">Sulfurisphaera tokodaii (strain DSM 16993 / JCM 10545 / NBRC 100140 / 7)</name>
    <name type="common">Sulfolobus tokodaii</name>
    <dbReference type="NCBI Taxonomy" id="273063"/>
    <lineage>
        <taxon>Archaea</taxon>
        <taxon>Thermoproteota</taxon>
        <taxon>Thermoprotei</taxon>
        <taxon>Sulfolobales</taxon>
        <taxon>Sulfolobaceae</taxon>
        <taxon>Sulfurisphaera</taxon>
    </lineage>
</organism>
<dbReference type="EC" id="1.11.1.24" evidence="1"/>
<dbReference type="EMBL" id="BA000023">
    <property type="protein sequence ID" value="BAK54802.1"/>
    <property type="molecule type" value="Genomic_DNA"/>
</dbReference>
<dbReference type="RefSeq" id="WP_010980527.1">
    <property type="nucleotide sequence ID" value="NC_003106.2"/>
</dbReference>
<dbReference type="SMR" id="Q96XS5"/>
<dbReference type="STRING" id="273063.STK_24420"/>
<dbReference type="GeneID" id="1460525"/>
<dbReference type="KEGG" id="sto:STK_24420"/>
<dbReference type="PATRIC" id="fig|273063.9.peg.2759"/>
<dbReference type="eggNOG" id="arCOG00312">
    <property type="taxonomic scope" value="Archaea"/>
</dbReference>
<dbReference type="OrthoDB" id="6924at2157"/>
<dbReference type="Proteomes" id="UP000001015">
    <property type="component" value="Chromosome"/>
</dbReference>
<dbReference type="GO" id="GO:0005829">
    <property type="term" value="C:cytosol"/>
    <property type="evidence" value="ECO:0007669"/>
    <property type="project" value="TreeGrafter"/>
</dbReference>
<dbReference type="GO" id="GO:0008379">
    <property type="term" value="F:thioredoxin peroxidase activity"/>
    <property type="evidence" value="ECO:0007669"/>
    <property type="project" value="TreeGrafter"/>
</dbReference>
<dbReference type="GO" id="GO:0045454">
    <property type="term" value="P:cell redox homeostasis"/>
    <property type="evidence" value="ECO:0007669"/>
    <property type="project" value="TreeGrafter"/>
</dbReference>
<dbReference type="GO" id="GO:0033554">
    <property type="term" value="P:cellular response to stress"/>
    <property type="evidence" value="ECO:0007669"/>
    <property type="project" value="TreeGrafter"/>
</dbReference>
<dbReference type="GO" id="GO:0042744">
    <property type="term" value="P:hydrogen peroxide catabolic process"/>
    <property type="evidence" value="ECO:0007669"/>
    <property type="project" value="TreeGrafter"/>
</dbReference>
<dbReference type="GO" id="GO:0006979">
    <property type="term" value="P:response to oxidative stress"/>
    <property type="evidence" value="ECO:0007669"/>
    <property type="project" value="TreeGrafter"/>
</dbReference>
<dbReference type="CDD" id="cd03016">
    <property type="entry name" value="PRX_1cys"/>
    <property type="match status" value="1"/>
</dbReference>
<dbReference type="FunFam" id="3.30.1020.10:FF:000002">
    <property type="entry name" value="Peroxiredoxin"/>
    <property type="match status" value="1"/>
</dbReference>
<dbReference type="FunFam" id="3.40.30.10:FF:000011">
    <property type="entry name" value="Peroxiredoxin PRX1"/>
    <property type="match status" value="1"/>
</dbReference>
<dbReference type="Gene3D" id="3.30.1020.10">
    <property type="entry name" value="Antioxidant, Horf6, Chain A, domain2"/>
    <property type="match status" value="1"/>
</dbReference>
<dbReference type="Gene3D" id="3.40.30.10">
    <property type="entry name" value="Glutaredoxin"/>
    <property type="match status" value="1"/>
</dbReference>
<dbReference type="HAMAP" id="MF_00401">
    <property type="entry name" value="Peroxiredoxin"/>
    <property type="match status" value="1"/>
</dbReference>
<dbReference type="InterPro" id="IPR000866">
    <property type="entry name" value="AhpC/TSA"/>
</dbReference>
<dbReference type="InterPro" id="IPR050217">
    <property type="entry name" value="Peroxiredoxin"/>
</dbReference>
<dbReference type="InterPro" id="IPR024706">
    <property type="entry name" value="Peroxiredoxin_AhpC-typ"/>
</dbReference>
<dbReference type="InterPro" id="IPR019479">
    <property type="entry name" value="Peroxiredoxin_C"/>
</dbReference>
<dbReference type="InterPro" id="IPR022915">
    <property type="entry name" value="Peroxiredoxin_TDXH"/>
</dbReference>
<dbReference type="InterPro" id="IPR045020">
    <property type="entry name" value="PRX_1cys"/>
</dbReference>
<dbReference type="InterPro" id="IPR036249">
    <property type="entry name" value="Thioredoxin-like_sf"/>
</dbReference>
<dbReference type="InterPro" id="IPR013766">
    <property type="entry name" value="Thioredoxin_domain"/>
</dbReference>
<dbReference type="NCBIfam" id="NF009668">
    <property type="entry name" value="PRK13189.1"/>
    <property type="match status" value="1"/>
</dbReference>
<dbReference type="NCBIfam" id="NF009670">
    <property type="entry name" value="PRK13191.1"/>
    <property type="match status" value="1"/>
</dbReference>
<dbReference type="PANTHER" id="PTHR10681">
    <property type="entry name" value="THIOREDOXIN PEROXIDASE"/>
    <property type="match status" value="1"/>
</dbReference>
<dbReference type="PANTHER" id="PTHR10681:SF128">
    <property type="entry name" value="THIOREDOXIN-DEPENDENT PEROXIDE REDUCTASE, MITOCHONDRIAL"/>
    <property type="match status" value="1"/>
</dbReference>
<dbReference type="Pfam" id="PF10417">
    <property type="entry name" value="1-cysPrx_C"/>
    <property type="match status" value="1"/>
</dbReference>
<dbReference type="Pfam" id="PF00578">
    <property type="entry name" value="AhpC-TSA"/>
    <property type="match status" value="1"/>
</dbReference>
<dbReference type="PIRSF" id="PIRSF000239">
    <property type="entry name" value="AHPC"/>
    <property type="match status" value="1"/>
</dbReference>
<dbReference type="SUPFAM" id="SSF52833">
    <property type="entry name" value="Thioredoxin-like"/>
    <property type="match status" value="1"/>
</dbReference>
<dbReference type="PROSITE" id="PS51352">
    <property type="entry name" value="THIOREDOXIN_2"/>
    <property type="match status" value="1"/>
</dbReference>
<keyword id="KW-0049">Antioxidant</keyword>
<keyword id="KW-0963">Cytoplasm</keyword>
<keyword id="KW-0560">Oxidoreductase</keyword>
<keyword id="KW-0575">Peroxidase</keyword>
<keyword id="KW-0676">Redox-active center</keyword>
<keyword id="KW-1185">Reference proteome</keyword>
<feature type="chain" id="PRO_0000135171" description="Peroxiredoxin 2">
    <location>
        <begin position="1"/>
        <end position="212"/>
    </location>
</feature>
<feature type="domain" description="Thioredoxin" evidence="1">
    <location>
        <begin position="7"/>
        <end position="162"/>
    </location>
</feature>
<feature type="active site" description="Cysteine sulfenic acid (-SOH) intermediate" evidence="1">
    <location>
        <position position="49"/>
    </location>
</feature>
<feature type="binding site" evidence="1">
    <location>
        <position position="125"/>
    </location>
    <ligand>
        <name>substrate</name>
    </ligand>
</feature>
<gene>
    <name type="ordered locus">STK_24420</name>
</gene>
<sequence length="212" mass="24517">MSEEKIPLIGEKFPEMEVITTHGKIKLPDYYQGKWFVLFSHPGDFTPVCTTEFYSFAKKYEEFKKLNTELIGLSVDSNISHIEWVMWIEKNLKVEIPFPIIADPMGNVAKRLGMIHAESSTSTVRAVFIVDDKGIVRLIMYYPMEIGRNIDEILRSIRALQLVDKSGVVIPANWPNNELIGNKVINPPPRTVKDAKLRINQPFDWWFTYKEI</sequence>
<reference key="1">
    <citation type="journal article" date="2001" name="DNA Res.">
        <title>Complete genome sequence of an aerobic thermoacidophilic Crenarchaeon, Sulfolobus tokodaii strain7.</title>
        <authorList>
            <person name="Kawarabayasi Y."/>
            <person name="Hino Y."/>
            <person name="Horikawa H."/>
            <person name="Jin-no K."/>
            <person name="Takahashi M."/>
            <person name="Sekine M."/>
            <person name="Baba S."/>
            <person name="Ankai A."/>
            <person name="Kosugi H."/>
            <person name="Hosoyama A."/>
            <person name="Fukui S."/>
            <person name="Nagai Y."/>
            <person name="Nishijima K."/>
            <person name="Otsuka R."/>
            <person name="Nakazawa H."/>
            <person name="Takamiya M."/>
            <person name="Kato Y."/>
            <person name="Yoshizawa T."/>
            <person name="Tanaka T."/>
            <person name="Kudoh Y."/>
            <person name="Yamazaki J."/>
            <person name="Kushida N."/>
            <person name="Oguchi A."/>
            <person name="Aoki K."/>
            <person name="Masuda S."/>
            <person name="Yanagii M."/>
            <person name="Nishimura M."/>
            <person name="Yamagishi A."/>
            <person name="Oshima T."/>
            <person name="Kikuchi H."/>
        </authorList>
    </citation>
    <scope>NUCLEOTIDE SEQUENCE [LARGE SCALE GENOMIC DNA]</scope>
    <source>
        <strain>DSM 16993 / JCM 10545 / NBRC 100140 / 7</strain>
    </source>
</reference>
<protein>
    <recommendedName>
        <fullName evidence="1">Peroxiredoxin 2</fullName>
        <ecNumber evidence="1">1.11.1.24</ecNumber>
    </recommendedName>
    <alternativeName>
        <fullName evidence="1">Thioredoxin-dependent peroxiredoxin 2</fullName>
    </alternativeName>
</protein>
<proteinExistence type="inferred from homology"/>
<accession>Q96XS5</accession>
<accession>F9VPF5</accession>